<keyword id="KW-0413">Isomerase</keyword>
<keyword id="KW-1185">Reference proteome</keyword>
<keyword id="KW-0819">tRNA processing</keyword>
<comment type="function">
    <text evidence="1">Responsible for synthesis of pseudouridine from uracil-55 in the psi GC loop of transfer RNAs.</text>
</comment>
<comment type="catalytic activity">
    <reaction evidence="1">
        <text>uridine(55) in tRNA = pseudouridine(55) in tRNA</text>
        <dbReference type="Rhea" id="RHEA:42532"/>
        <dbReference type="Rhea" id="RHEA-COMP:10101"/>
        <dbReference type="Rhea" id="RHEA-COMP:10102"/>
        <dbReference type="ChEBI" id="CHEBI:65314"/>
        <dbReference type="ChEBI" id="CHEBI:65315"/>
        <dbReference type="EC" id="5.4.99.25"/>
    </reaction>
</comment>
<comment type="similarity">
    <text evidence="1">Belongs to the pseudouridine synthase TruB family. Type 1 subfamily.</text>
</comment>
<evidence type="ECO:0000255" key="1">
    <source>
        <dbReference type="HAMAP-Rule" id="MF_01080"/>
    </source>
</evidence>
<accession>Q9PQD7</accession>
<organism>
    <name type="scientific">Ureaplasma parvum serovar 3 (strain ATCC 700970)</name>
    <dbReference type="NCBI Taxonomy" id="273119"/>
    <lineage>
        <taxon>Bacteria</taxon>
        <taxon>Bacillati</taxon>
        <taxon>Mycoplasmatota</taxon>
        <taxon>Mycoplasmoidales</taxon>
        <taxon>Mycoplasmoidaceae</taxon>
        <taxon>Ureaplasma</taxon>
    </lineage>
</organism>
<gene>
    <name evidence="1" type="primary">truB</name>
    <name type="ordered locus">UU354</name>
</gene>
<sequence>MSAISKNIIIINKPIKWTSNDVVQKVKRVIGAKKVGHAGTLDPNASGVLVLGINEGTKLLTKLILDNKSYIAEIKFGTSTNTYDAAGEIVSSTNRMVTLTEVTKIVKDFYKNDYWQKPPQFSALKINGQKAYVLARQKVDFEIAPRLVKIFKYQIMDFNYEKQILKISLHVSKGFYVRSFAVDLATKINNLAHLLTLIRTQSGPFEIKDAIEIEQVYDYWNNINKYL</sequence>
<dbReference type="EC" id="5.4.99.25" evidence="1"/>
<dbReference type="EMBL" id="AF222894">
    <property type="protein sequence ID" value="AAF30763.1"/>
    <property type="molecule type" value="Genomic_DNA"/>
</dbReference>
<dbReference type="RefSeq" id="WP_006688525.1">
    <property type="nucleotide sequence ID" value="NC_002162.1"/>
</dbReference>
<dbReference type="SMR" id="Q9PQD7"/>
<dbReference type="STRING" id="273119.UU354"/>
<dbReference type="EnsemblBacteria" id="AAF30763">
    <property type="protein sequence ID" value="AAF30763"/>
    <property type="gene ID" value="UU354"/>
</dbReference>
<dbReference type="GeneID" id="29672408"/>
<dbReference type="KEGG" id="uur:UU354"/>
<dbReference type="eggNOG" id="COG0130">
    <property type="taxonomic scope" value="Bacteria"/>
</dbReference>
<dbReference type="HOGENOM" id="CLU_032087_2_0_14"/>
<dbReference type="OrthoDB" id="9802309at2"/>
<dbReference type="Proteomes" id="UP000000423">
    <property type="component" value="Chromosome"/>
</dbReference>
<dbReference type="GO" id="GO:0003723">
    <property type="term" value="F:RNA binding"/>
    <property type="evidence" value="ECO:0007669"/>
    <property type="project" value="InterPro"/>
</dbReference>
<dbReference type="GO" id="GO:0160148">
    <property type="term" value="F:tRNA pseudouridine(55) synthase activity"/>
    <property type="evidence" value="ECO:0007669"/>
    <property type="project" value="UniProtKB-EC"/>
</dbReference>
<dbReference type="GO" id="GO:1990481">
    <property type="term" value="P:mRNA pseudouridine synthesis"/>
    <property type="evidence" value="ECO:0007669"/>
    <property type="project" value="TreeGrafter"/>
</dbReference>
<dbReference type="GO" id="GO:0031119">
    <property type="term" value="P:tRNA pseudouridine synthesis"/>
    <property type="evidence" value="ECO:0007669"/>
    <property type="project" value="UniProtKB-UniRule"/>
</dbReference>
<dbReference type="Gene3D" id="3.30.2350.10">
    <property type="entry name" value="Pseudouridine synthase"/>
    <property type="match status" value="1"/>
</dbReference>
<dbReference type="HAMAP" id="MF_01080">
    <property type="entry name" value="TruB_bact"/>
    <property type="match status" value="1"/>
</dbReference>
<dbReference type="InterPro" id="IPR020103">
    <property type="entry name" value="PsdUridine_synth_cat_dom_sf"/>
</dbReference>
<dbReference type="InterPro" id="IPR002501">
    <property type="entry name" value="PsdUridine_synth_N"/>
</dbReference>
<dbReference type="InterPro" id="IPR014780">
    <property type="entry name" value="tRNA_psdUridine_synth_TruB"/>
</dbReference>
<dbReference type="NCBIfam" id="TIGR00431">
    <property type="entry name" value="TruB"/>
    <property type="match status" value="1"/>
</dbReference>
<dbReference type="PANTHER" id="PTHR13767:SF2">
    <property type="entry name" value="PSEUDOURIDYLATE SYNTHASE TRUB1"/>
    <property type="match status" value="1"/>
</dbReference>
<dbReference type="PANTHER" id="PTHR13767">
    <property type="entry name" value="TRNA-PSEUDOURIDINE SYNTHASE"/>
    <property type="match status" value="1"/>
</dbReference>
<dbReference type="Pfam" id="PF01509">
    <property type="entry name" value="TruB_N"/>
    <property type="match status" value="1"/>
</dbReference>
<dbReference type="SUPFAM" id="SSF55120">
    <property type="entry name" value="Pseudouridine synthase"/>
    <property type="match status" value="1"/>
</dbReference>
<name>TRUB_UREPA</name>
<feature type="chain" id="PRO_0000121937" description="tRNA pseudouridine synthase B">
    <location>
        <begin position="1"/>
        <end position="227"/>
    </location>
</feature>
<feature type="active site" description="Nucleophile" evidence="1">
    <location>
        <position position="42"/>
    </location>
</feature>
<reference key="1">
    <citation type="journal article" date="2000" name="Nature">
        <title>The complete sequence of the mucosal pathogen Ureaplasma urealyticum.</title>
        <authorList>
            <person name="Glass J.I."/>
            <person name="Lefkowitz E.J."/>
            <person name="Glass J.S."/>
            <person name="Heiner C.R."/>
            <person name="Chen E.Y."/>
            <person name="Cassell G.H."/>
        </authorList>
    </citation>
    <scope>NUCLEOTIDE SEQUENCE [LARGE SCALE GENOMIC DNA]</scope>
    <source>
        <strain>ATCC 700970</strain>
    </source>
</reference>
<protein>
    <recommendedName>
        <fullName evidence="1">tRNA pseudouridine synthase B</fullName>
        <ecNumber evidence="1">5.4.99.25</ecNumber>
    </recommendedName>
    <alternativeName>
        <fullName evidence="1">tRNA pseudouridine(55) synthase</fullName>
        <shortName evidence="1">Psi55 synthase</shortName>
    </alternativeName>
    <alternativeName>
        <fullName evidence="1">tRNA pseudouridylate synthase</fullName>
    </alternativeName>
    <alternativeName>
        <fullName evidence="1">tRNA-uridine isomerase</fullName>
    </alternativeName>
</protein>
<proteinExistence type="inferred from homology"/>